<feature type="chain" id="PRO_0000061131" description="Cytochrome b">
    <location>
        <begin position="1"/>
        <end position="379"/>
    </location>
</feature>
<feature type="transmembrane region" description="Helical" evidence="2">
    <location>
        <begin position="33"/>
        <end position="53"/>
    </location>
</feature>
<feature type="transmembrane region" description="Helical" evidence="2">
    <location>
        <begin position="77"/>
        <end position="98"/>
    </location>
</feature>
<feature type="transmembrane region" description="Helical" evidence="2">
    <location>
        <begin position="113"/>
        <end position="133"/>
    </location>
</feature>
<feature type="transmembrane region" description="Helical" evidence="2">
    <location>
        <begin position="178"/>
        <end position="198"/>
    </location>
</feature>
<feature type="transmembrane region" description="Helical" evidence="2">
    <location>
        <begin position="226"/>
        <end position="246"/>
    </location>
</feature>
<feature type="transmembrane region" description="Helical" evidence="2">
    <location>
        <begin position="288"/>
        <end position="308"/>
    </location>
</feature>
<feature type="transmembrane region" description="Helical" evidence="2">
    <location>
        <begin position="320"/>
        <end position="340"/>
    </location>
</feature>
<feature type="transmembrane region" description="Helical" evidence="2">
    <location>
        <begin position="347"/>
        <end position="367"/>
    </location>
</feature>
<feature type="binding site" description="axial binding residue" evidence="2">
    <location>
        <position position="83"/>
    </location>
    <ligand>
        <name>heme b</name>
        <dbReference type="ChEBI" id="CHEBI:60344"/>
        <label>b562</label>
    </ligand>
    <ligandPart>
        <name>Fe</name>
        <dbReference type="ChEBI" id="CHEBI:18248"/>
    </ligandPart>
</feature>
<feature type="binding site" description="axial binding residue" evidence="2">
    <location>
        <position position="97"/>
    </location>
    <ligand>
        <name>heme b</name>
        <dbReference type="ChEBI" id="CHEBI:60344"/>
        <label>b566</label>
    </ligand>
    <ligandPart>
        <name>Fe</name>
        <dbReference type="ChEBI" id="CHEBI:18248"/>
    </ligandPart>
</feature>
<feature type="binding site" description="axial binding residue" evidence="2">
    <location>
        <position position="182"/>
    </location>
    <ligand>
        <name>heme b</name>
        <dbReference type="ChEBI" id="CHEBI:60344"/>
        <label>b562</label>
    </ligand>
    <ligandPart>
        <name>Fe</name>
        <dbReference type="ChEBI" id="CHEBI:18248"/>
    </ligandPart>
</feature>
<feature type="binding site" description="axial binding residue" evidence="2">
    <location>
        <position position="196"/>
    </location>
    <ligand>
        <name>heme b</name>
        <dbReference type="ChEBI" id="CHEBI:60344"/>
        <label>b566</label>
    </ligand>
    <ligandPart>
        <name>Fe</name>
        <dbReference type="ChEBI" id="CHEBI:18248"/>
    </ligandPart>
</feature>
<feature type="binding site" evidence="2">
    <location>
        <position position="201"/>
    </location>
    <ligand>
        <name>a ubiquinone</name>
        <dbReference type="ChEBI" id="CHEBI:16389"/>
    </ligand>
</feature>
<evidence type="ECO:0000250" key="1"/>
<evidence type="ECO:0000250" key="2">
    <source>
        <dbReference type="UniProtKB" id="P00157"/>
    </source>
</evidence>
<evidence type="ECO:0000255" key="3">
    <source>
        <dbReference type="PROSITE-ProRule" id="PRU00967"/>
    </source>
</evidence>
<evidence type="ECO:0000255" key="4">
    <source>
        <dbReference type="PROSITE-ProRule" id="PRU00968"/>
    </source>
</evidence>
<proteinExistence type="inferred from homology"/>
<keyword id="KW-0249">Electron transport</keyword>
<keyword id="KW-0349">Heme</keyword>
<keyword id="KW-0408">Iron</keyword>
<keyword id="KW-0472">Membrane</keyword>
<keyword id="KW-0479">Metal-binding</keyword>
<keyword id="KW-0496">Mitochondrion</keyword>
<keyword id="KW-0999">Mitochondrion inner membrane</keyword>
<keyword id="KW-0679">Respiratory chain</keyword>
<keyword id="KW-0812">Transmembrane</keyword>
<keyword id="KW-1133">Transmembrane helix</keyword>
<keyword id="KW-0813">Transport</keyword>
<keyword id="KW-0830">Ubiquinone</keyword>
<name>CYB_LONCN</name>
<geneLocation type="mitochondrion"/>
<organism>
    <name type="scientific">Lontra canadensis</name>
    <name type="common">North American river otter</name>
    <name type="synonym">Lutra canadensis</name>
    <dbReference type="NCBI Taxonomy" id="76717"/>
    <lineage>
        <taxon>Eukaryota</taxon>
        <taxon>Metazoa</taxon>
        <taxon>Chordata</taxon>
        <taxon>Craniata</taxon>
        <taxon>Vertebrata</taxon>
        <taxon>Euteleostomi</taxon>
        <taxon>Mammalia</taxon>
        <taxon>Eutheria</taxon>
        <taxon>Laurasiatheria</taxon>
        <taxon>Carnivora</taxon>
        <taxon>Caniformia</taxon>
        <taxon>Musteloidea</taxon>
        <taxon>Mustelidae</taxon>
        <taxon>Lutrinae</taxon>
        <taxon>Lontra</taxon>
    </lineage>
</organism>
<reference key="1">
    <citation type="journal article" date="1998" name="J. Zool. (Lond.)">
        <title>Phylogenetic relationships of otters (Carnivora: Mustelidae) based on mitochondrial cytochrome b sequences.</title>
        <authorList>
            <person name="Koepfli K.-P."/>
            <person name="Wayne R.K."/>
        </authorList>
    </citation>
    <scope>NUCLEOTIDE SEQUENCE [GENOMIC DNA]</scope>
</reference>
<sequence length="379" mass="42288">MTNIRKTHPLAKIINDSFVDLPAPSNISAWWNFGSLLGICLILQILTGLFLAMHYTSDTATAFSSVTHICRDVNYGWVIRYMHANGASMFFICLFLHVGRGLYYGSYMFPETWNIGIVLLFAVMATAFMGYVLPWGQMSFWGATVITNLLSAIPYVGTSLVEWIWGGFSVDKATLTRFFAFHFILPFIISALAAVHLLFLHETGSNNPSGIPSDSDKIPFHPYYTIKDALGALLLILALMTLVLFSPDLLGDPDNYIPANPLNTPPHIKPEWYFLFAYAILRSIPNKLGGVLALALSILVLAIIPLLHTSKQRGMMFRPLSQCLFWLLTADLLTLTWIGGQPVEHPFIIIGQLASILYFTILLILMPAVSIVENNLLKW</sequence>
<protein>
    <recommendedName>
        <fullName>Cytochrome b</fullName>
    </recommendedName>
    <alternativeName>
        <fullName>Complex III subunit 3</fullName>
    </alternativeName>
    <alternativeName>
        <fullName>Complex III subunit III</fullName>
    </alternativeName>
    <alternativeName>
        <fullName>Cytochrome b-c1 complex subunit 3</fullName>
    </alternativeName>
    <alternativeName>
        <fullName>Ubiquinol-cytochrome-c reductase complex cytochrome b subunit</fullName>
    </alternativeName>
</protein>
<dbReference type="EMBL" id="AF057121">
    <property type="protein sequence ID" value="AAC33701.1"/>
    <property type="molecule type" value="Genomic_DNA"/>
</dbReference>
<dbReference type="SMR" id="O78929"/>
<dbReference type="GO" id="GO:0005743">
    <property type="term" value="C:mitochondrial inner membrane"/>
    <property type="evidence" value="ECO:0007669"/>
    <property type="project" value="UniProtKB-SubCell"/>
</dbReference>
<dbReference type="GO" id="GO:0045275">
    <property type="term" value="C:respiratory chain complex III"/>
    <property type="evidence" value="ECO:0007669"/>
    <property type="project" value="InterPro"/>
</dbReference>
<dbReference type="GO" id="GO:0046872">
    <property type="term" value="F:metal ion binding"/>
    <property type="evidence" value="ECO:0007669"/>
    <property type="project" value="UniProtKB-KW"/>
</dbReference>
<dbReference type="GO" id="GO:0008121">
    <property type="term" value="F:ubiquinol-cytochrome-c reductase activity"/>
    <property type="evidence" value="ECO:0007669"/>
    <property type="project" value="InterPro"/>
</dbReference>
<dbReference type="GO" id="GO:0006122">
    <property type="term" value="P:mitochondrial electron transport, ubiquinol to cytochrome c"/>
    <property type="evidence" value="ECO:0007669"/>
    <property type="project" value="TreeGrafter"/>
</dbReference>
<dbReference type="CDD" id="cd00290">
    <property type="entry name" value="cytochrome_b_C"/>
    <property type="match status" value="1"/>
</dbReference>
<dbReference type="CDD" id="cd00284">
    <property type="entry name" value="Cytochrome_b_N"/>
    <property type="match status" value="1"/>
</dbReference>
<dbReference type="FunFam" id="1.20.810.10:FF:000002">
    <property type="entry name" value="Cytochrome b"/>
    <property type="match status" value="1"/>
</dbReference>
<dbReference type="Gene3D" id="1.20.810.10">
    <property type="entry name" value="Cytochrome Bc1 Complex, Chain C"/>
    <property type="match status" value="1"/>
</dbReference>
<dbReference type="InterPro" id="IPR005798">
    <property type="entry name" value="Cyt_b/b6_C"/>
</dbReference>
<dbReference type="InterPro" id="IPR036150">
    <property type="entry name" value="Cyt_b/b6_C_sf"/>
</dbReference>
<dbReference type="InterPro" id="IPR005797">
    <property type="entry name" value="Cyt_b/b6_N"/>
</dbReference>
<dbReference type="InterPro" id="IPR027387">
    <property type="entry name" value="Cytb/b6-like_sf"/>
</dbReference>
<dbReference type="InterPro" id="IPR030689">
    <property type="entry name" value="Cytochrome_b"/>
</dbReference>
<dbReference type="InterPro" id="IPR048260">
    <property type="entry name" value="Cytochrome_b_C_euk/bac"/>
</dbReference>
<dbReference type="InterPro" id="IPR048259">
    <property type="entry name" value="Cytochrome_b_N_euk/bac"/>
</dbReference>
<dbReference type="InterPro" id="IPR016174">
    <property type="entry name" value="Di-haem_cyt_TM"/>
</dbReference>
<dbReference type="PANTHER" id="PTHR19271">
    <property type="entry name" value="CYTOCHROME B"/>
    <property type="match status" value="1"/>
</dbReference>
<dbReference type="PANTHER" id="PTHR19271:SF16">
    <property type="entry name" value="CYTOCHROME B"/>
    <property type="match status" value="1"/>
</dbReference>
<dbReference type="Pfam" id="PF00032">
    <property type="entry name" value="Cytochrom_B_C"/>
    <property type="match status" value="1"/>
</dbReference>
<dbReference type="Pfam" id="PF00033">
    <property type="entry name" value="Cytochrome_B"/>
    <property type="match status" value="1"/>
</dbReference>
<dbReference type="PIRSF" id="PIRSF038885">
    <property type="entry name" value="COB"/>
    <property type="match status" value="1"/>
</dbReference>
<dbReference type="SUPFAM" id="SSF81648">
    <property type="entry name" value="a domain/subunit of cytochrome bc1 complex (Ubiquinol-cytochrome c reductase)"/>
    <property type="match status" value="1"/>
</dbReference>
<dbReference type="SUPFAM" id="SSF81342">
    <property type="entry name" value="Transmembrane di-heme cytochromes"/>
    <property type="match status" value="1"/>
</dbReference>
<dbReference type="PROSITE" id="PS51003">
    <property type="entry name" value="CYTB_CTER"/>
    <property type="match status" value="1"/>
</dbReference>
<dbReference type="PROSITE" id="PS51002">
    <property type="entry name" value="CYTB_NTER"/>
    <property type="match status" value="1"/>
</dbReference>
<accession>O78929</accession>
<gene>
    <name type="primary">MT-CYB</name>
    <name type="synonym">COB</name>
    <name type="synonym">CYTB</name>
    <name type="synonym">MTCYB</name>
</gene>
<comment type="function">
    <text evidence="2">Component of the ubiquinol-cytochrome c reductase complex (complex III or cytochrome b-c1 complex) that is part of the mitochondrial respiratory chain. The b-c1 complex mediates electron transfer from ubiquinol to cytochrome c. Contributes to the generation of a proton gradient across the mitochondrial membrane that is then used for ATP synthesis.</text>
</comment>
<comment type="cofactor">
    <cofactor evidence="2">
        <name>heme b</name>
        <dbReference type="ChEBI" id="CHEBI:60344"/>
    </cofactor>
    <text evidence="2">Binds 2 heme b groups non-covalently.</text>
</comment>
<comment type="subunit">
    <text evidence="2">The cytochrome bc1 complex contains 11 subunits: 3 respiratory subunits (MT-CYB, CYC1 and UQCRFS1), 2 core proteins (UQCRC1 and UQCRC2) and 6 low-molecular weight proteins (UQCRH/QCR6, UQCRB/QCR7, UQCRQ/QCR8, UQCR10/QCR9, UQCR11/QCR10 and a cleavage product of UQCRFS1). This cytochrome bc1 complex then forms a dimer.</text>
</comment>
<comment type="subcellular location">
    <subcellularLocation>
        <location evidence="2">Mitochondrion inner membrane</location>
        <topology evidence="2">Multi-pass membrane protein</topology>
    </subcellularLocation>
</comment>
<comment type="miscellaneous">
    <text evidence="1">Heme 1 (or BL or b562) is low-potential and absorbs at about 562 nm, and heme 2 (or BH or b566) is high-potential and absorbs at about 566 nm.</text>
</comment>
<comment type="similarity">
    <text evidence="3 4">Belongs to the cytochrome b family.</text>
</comment>
<comment type="caution">
    <text evidence="2">The full-length protein contains only eight transmembrane helices, not nine as predicted by bioinformatics tools.</text>
</comment>